<comment type="subcellular location">
    <subcellularLocation>
        <location evidence="1">Nucleus</location>
        <location evidence="1">Nucleolus</location>
    </subcellularLocation>
</comment>
<comment type="similarity">
    <text evidence="2">Belongs to the SWM2 family.</text>
</comment>
<protein>
    <recommendedName>
        <fullName>Nucleolar protein SWM2</fullName>
    </recommendedName>
</protein>
<name>SWM2_VANPO</name>
<accession>A7TRI3</accession>
<dbReference type="EMBL" id="DS480480">
    <property type="protein sequence ID" value="EDO15112.1"/>
    <property type="molecule type" value="Genomic_DNA"/>
</dbReference>
<dbReference type="RefSeq" id="XP_001642970.1">
    <property type="nucleotide sequence ID" value="XM_001642920.1"/>
</dbReference>
<dbReference type="SMR" id="A7TRI3"/>
<dbReference type="FunCoup" id="A7TRI3">
    <property type="interactions" value="21"/>
</dbReference>
<dbReference type="GeneID" id="5543167"/>
<dbReference type="KEGG" id="vpo:Kpol_1046p2"/>
<dbReference type="eggNOG" id="ENOG502S9UQ">
    <property type="taxonomic scope" value="Eukaryota"/>
</dbReference>
<dbReference type="HOGENOM" id="CLU_147530_0_0_1"/>
<dbReference type="InParanoid" id="A7TRI3"/>
<dbReference type="OMA" id="NAVRICE"/>
<dbReference type="OrthoDB" id="4033486at2759"/>
<dbReference type="PhylomeDB" id="A7TRI3"/>
<dbReference type="Proteomes" id="UP000000267">
    <property type="component" value="Unassembled WGS sequence"/>
</dbReference>
<dbReference type="GO" id="GO:0005730">
    <property type="term" value="C:nucleolus"/>
    <property type="evidence" value="ECO:0007669"/>
    <property type="project" value="UniProtKB-SubCell"/>
</dbReference>
<dbReference type="GO" id="GO:0036261">
    <property type="term" value="P:7-methylguanosine cap hypermethylation"/>
    <property type="evidence" value="ECO:0007669"/>
    <property type="project" value="EnsemblFungi"/>
</dbReference>
<dbReference type="GO" id="GO:0008033">
    <property type="term" value="P:tRNA processing"/>
    <property type="evidence" value="ECO:0007669"/>
    <property type="project" value="EnsemblFungi"/>
</dbReference>
<dbReference type="InterPro" id="IPR031391">
    <property type="entry name" value="Swm2"/>
</dbReference>
<dbReference type="Pfam" id="PF17083">
    <property type="entry name" value="Swm2"/>
    <property type="match status" value="1"/>
</dbReference>
<sequence>MTGSLEKEITLTFLRNFRDSPVLLKEYGPYLSYHYKVVANDGELSLNAVRICEELFNDWQNGDHTIAKEVVQCALDMWFVMKGEEYDLKGFEYIPNLIIQEIDVAKGKNTGEIHRIEFHPSTNEPIDEPLNNLILEEVEVHDFI</sequence>
<proteinExistence type="inferred from homology"/>
<organism>
    <name type="scientific">Vanderwaltozyma polyspora (strain ATCC 22028 / DSM 70294 / BCRC 21397 / CBS 2163 / NBRC 10782 / NRRL Y-8283 / UCD 57-17)</name>
    <name type="common">Kluyveromyces polysporus</name>
    <dbReference type="NCBI Taxonomy" id="436907"/>
    <lineage>
        <taxon>Eukaryota</taxon>
        <taxon>Fungi</taxon>
        <taxon>Dikarya</taxon>
        <taxon>Ascomycota</taxon>
        <taxon>Saccharomycotina</taxon>
        <taxon>Saccharomycetes</taxon>
        <taxon>Saccharomycetales</taxon>
        <taxon>Saccharomycetaceae</taxon>
        <taxon>Vanderwaltozyma</taxon>
    </lineage>
</organism>
<evidence type="ECO:0000250" key="1"/>
<evidence type="ECO:0000305" key="2"/>
<keyword id="KW-0539">Nucleus</keyword>
<keyword id="KW-1185">Reference proteome</keyword>
<reference key="1">
    <citation type="journal article" date="2007" name="Proc. Natl. Acad. Sci. U.S.A.">
        <title>Independent sorting-out of thousands of duplicated gene pairs in two yeast species descended from a whole-genome duplication.</title>
        <authorList>
            <person name="Scannell D.R."/>
            <person name="Frank A.C."/>
            <person name="Conant G.C."/>
            <person name="Byrne K.P."/>
            <person name="Woolfit M."/>
            <person name="Wolfe K.H."/>
        </authorList>
    </citation>
    <scope>NUCLEOTIDE SEQUENCE [LARGE SCALE GENOMIC DNA]</scope>
    <source>
        <strain>ATCC 22028 / DSM 70294 / BCRC 21397 / CBS 2163 / NBRC 10782 / NRRL Y-8283 / UCD 57-17</strain>
    </source>
</reference>
<feature type="chain" id="PRO_0000405675" description="Nucleolar protein SWM2">
    <location>
        <begin position="1"/>
        <end position="144"/>
    </location>
</feature>
<gene>
    <name type="primary">SWM2</name>
    <name type="ORF">Kpol_1046p2</name>
</gene>